<gene>
    <name evidence="1" type="primary">atpE</name>
    <name type="ordered locus">Mbar_A0389</name>
</gene>
<organism>
    <name type="scientific">Methanosarcina barkeri (strain Fusaro / DSM 804)</name>
    <dbReference type="NCBI Taxonomy" id="269797"/>
    <lineage>
        <taxon>Archaea</taxon>
        <taxon>Methanobacteriati</taxon>
        <taxon>Methanobacteriota</taxon>
        <taxon>Stenosarchaea group</taxon>
        <taxon>Methanomicrobia</taxon>
        <taxon>Methanosarcinales</taxon>
        <taxon>Methanosarcinaceae</taxon>
        <taxon>Methanosarcina</taxon>
    </lineage>
</organism>
<sequence length="183" mass="20279">MGLEIVVKDIQEGASAEVSRIKAEGDAKASEIINEAKEVQKKTLGDSLAKAEEDLQNLHQQVISSANLEVKRITLNKRKDLLDKVYVQTVEKIKSMPASKKEELLKNILSKYEASGARVYSSKDSEDIVKKLTSLSYAGNLDAIGGIVLENEDGTVRLDFTYDSILKNVYERSLKQISDLLYG</sequence>
<protein>
    <recommendedName>
        <fullName evidence="1">A-type ATP synthase subunit E</fullName>
    </recommendedName>
</protein>
<dbReference type="EMBL" id="CP000099">
    <property type="protein sequence ID" value="AAZ69372.1"/>
    <property type="molecule type" value="Genomic_DNA"/>
</dbReference>
<dbReference type="SMR" id="Q46FH0"/>
<dbReference type="STRING" id="269797.Mbar_A0389"/>
<dbReference type="PaxDb" id="269797-Mbar_A0389"/>
<dbReference type="KEGG" id="mba:Mbar_A0389"/>
<dbReference type="eggNOG" id="arCOG00869">
    <property type="taxonomic scope" value="Archaea"/>
</dbReference>
<dbReference type="HOGENOM" id="CLU_120786_0_0_2"/>
<dbReference type="OrthoDB" id="4691at2157"/>
<dbReference type="GO" id="GO:0005886">
    <property type="term" value="C:plasma membrane"/>
    <property type="evidence" value="ECO:0007669"/>
    <property type="project" value="UniProtKB-SubCell"/>
</dbReference>
<dbReference type="GO" id="GO:0033178">
    <property type="term" value="C:proton-transporting two-sector ATPase complex, catalytic domain"/>
    <property type="evidence" value="ECO:0007669"/>
    <property type="project" value="InterPro"/>
</dbReference>
<dbReference type="GO" id="GO:0005524">
    <property type="term" value="F:ATP binding"/>
    <property type="evidence" value="ECO:0007669"/>
    <property type="project" value="UniProtKB-UniRule"/>
</dbReference>
<dbReference type="GO" id="GO:0046933">
    <property type="term" value="F:proton-transporting ATP synthase activity, rotational mechanism"/>
    <property type="evidence" value="ECO:0007669"/>
    <property type="project" value="UniProtKB-UniRule"/>
</dbReference>
<dbReference type="GO" id="GO:0046961">
    <property type="term" value="F:proton-transporting ATPase activity, rotational mechanism"/>
    <property type="evidence" value="ECO:0007669"/>
    <property type="project" value="InterPro"/>
</dbReference>
<dbReference type="GO" id="GO:0042777">
    <property type="term" value="P:proton motive force-driven plasma membrane ATP synthesis"/>
    <property type="evidence" value="ECO:0007669"/>
    <property type="project" value="UniProtKB-UniRule"/>
</dbReference>
<dbReference type="Gene3D" id="3.30.2320.30">
    <property type="entry name" value="ATP synthase, E subunit, C-terminal"/>
    <property type="match status" value="1"/>
</dbReference>
<dbReference type="HAMAP" id="MF_00311">
    <property type="entry name" value="ATP_synth_E_arch"/>
    <property type="match status" value="1"/>
</dbReference>
<dbReference type="InterPro" id="IPR038495">
    <property type="entry name" value="ATPase_E_C"/>
</dbReference>
<dbReference type="InterPro" id="IPR002842">
    <property type="entry name" value="ATPase_V1_Esu"/>
</dbReference>
<dbReference type="NCBIfam" id="NF002629">
    <property type="entry name" value="PRK02292.1"/>
    <property type="match status" value="1"/>
</dbReference>
<dbReference type="Pfam" id="PF01991">
    <property type="entry name" value="vATP-synt_E"/>
    <property type="match status" value="1"/>
</dbReference>
<dbReference type="SUPFAM" id="SSF160527">
    <property type="entry name" value="V-type ATPase subunit E-like"/>
    <property type="match status" value="1"/>
</dbReference>
<comment type="function">
    <text evidence="1">Component of the A-type ATP synthase that produces ATP from ADP in the presence of a proton gradient across the membrane.</text>
</comment>
<comment type="subunit">
    <text evidence="1">Has multiple subunits with at least A(3), B(3), C, D, E, F, H, I and proteolipid K(x).</text>
</comment>
<comment type="subcellular location">
    <subcellularLocation>
        <location evidence="1">Cell membrane</location>
        <topology evidence="1">Peripheral membrane protein</topology>
    </subcellularLocation>
</comment>
<comment type="similarity">
    <text evidence="1">Belongs to the V-ATPase E subunit family.</text>
</comment>
<evidence type="ECO:0000255" key="1">
    <source>
        <dbReference type="HAMAP-Rule" id="MF_00311"/>
    </source>
</evidence>
<reference key="1">
    <citation type="journal article" date="2006" name="J. Bacteriol.">
        <title>The Methanosarcina barkeri genome: comparative analysis with Methanosarcina acetivorans and Methanosarcina mazei reveals extensive rearrangement within methanosarcinal genomes.</title>
        <authorList>
            <person name="Maeder D.L."/>
            <person name="Anderson I."/>
            <person name="Brettin T.S."/>
            <person name="Bruce D.C."/>
            <person name="Gilna P."/>
            <person name="Han C.S."/>
            <person name="Lapidus A."/>
            <person name="Metcalf W.W."/>
            <person name="Saunders E."/>
            <person name="Tapia R."/>
            <person name="Sowers K.R."/>
        </authorList>
    </citation>
    <scope>NUCLEOTIDE SEQUENCE [LARGE SCALE GENOMIC DNA]</scope>
    <source>
        <strain>Fusaro / DSM 804</strain>
    </source>
</reference>
<keyword id="KW-0066">ATP synthesis</keyword>
<keyword id="KW-1003">Cell membrane</keyword>
<keyword id="KW-0375">Hydrogen ion transport</keyword>
<keyword id="KW-0406">Ion transport</keyword>
<keyword id="KW-0472">Membrane</keyword>
<keyword id="KW-0813">Transport</keyword>
<name>AATE_METBF</name>
<feature type="chain" id="PRO_1000059411" description="A-type ATP synthase subunit E">
    <location>
        <begin position="1"/>
        <end position="183"/>
    </location>
</feature>
<accession>Q46FH0</accession>
<proteinExistence type="inferred from homology"/>